<accession>Q02950</accession>
<accession>D6W3Q0</accession>
<evidence type="ECO:0000269" key="1">
    <source>
    </source>
</evidence>
<evidence type="ECO:0000269" key="2">
    <source>
    </source>
</evidence>
<evidence type="ECO:0000269" key="3">
    <source>
    </source>
</evidence>
<evidence type="ECO:0000269" key="4">
    <source>
    </source>
</evidence>
<evidence type="ECO:0000269" key="5">
    <source>
    </source>
</evidence>
<evidence type="ECO:0000269" key="6">
    <source>
    </source>
</evidence>
<evidence type="ECO:0000269" key="7">
    <source>
    </source>
</evidence>
<evidence type="ECO:0000269" key="8">
    <source>
    </source>
</evidence>
<evidence type="ECO:0000303" key="9">
    <source>
    </source>
</evidence>
<evidence type="ECO:0000305" key="10"/>
<evidence type="ECO:0000305" key="11">
    <source>
    </source>
</evidence>
<evidence type="ECO:0000305" key="12">
    <source>
    </source>
</evidence>
<evidence type="ECO:0007744" key="13">
    <source>
    </source>
</evidence>
<evidence type="ECO:0007829" key="14">
    <source>
        <dbReference type="PDB" id="8D8K"/>
    </source>
</evidence>
<evidence type="ECO:0007829" key="15">
    <source>
        <dbReference type="PDB" id="8D8L"/>
    </source>
</evidence>
<protein>
    <recommendedName>
        <fullName evidence="9">Small ribosomal subunit protein bS1m</fullName>
    </recommendedName>
    <alternativeName>
        <fullName>37S ribosomal protein MRP51, mitochondrial</fullName>
    </alternativeName>
</protein>
<dbReference type="EMBL" id="U43503">
    <property type="protein sequence ID" value="AAB68244.1"/>
    <property type="molecule type" value="Genomic_DNA"/>
</dbReference>
<dbReference type="EMBL" id="AY692937">
    <property type="protein sequence ID" value="AAT92956.1"/>
    <property type="molecule type" value="Genomic_DNA"/>
</dbReference>
<dbReference type="EMBL" id="BK006949">
    <property type="protein sequence ID" value="DAA11316.1"/>
    <property type="molecule type" value="Genomic_DNA"/>
</dbReference>
<dbReference type="PIR" id="S62004">
    <property type="entry name" value="S62004"/>
</dbReference>
<dbReference type="RefSeq" id="NP_015207.1">
    <property type="nucleotide sequence ID" value="NM_001183932.1"/>
</dbReference>
<dbReference type="PDB" id="5MRC">
    <property type="method" value="EM"/>
    <property type="resolution" value="3.25 A"/>
    <property type="chains" value="AA=1-344"/>
</dbReference>
<dbReference type="PDB" id="5MRE">
    <property type="method" value="EM"/>
    <property type="resolution" value="3.75 A"/>
    <property type="chains" value="AA=1-344"/>
</dbReference>
<dbReference type="PDB" id="5MRF">
    <property type="method" value="EM"/>
    <property type="resolution" value="4.97 A"/>
    <property type="chains" value="AA=1-344"/>
</dbReference>
<dbReference type="PDB" id="8D8K">
    <property type="method" value="EM"/>
    <property type="resolution" value="3.13 A"/>
    <property type="chains" value="A=1-344"/>
</dbReference>
<dbReference type="PDB" id="8D8L">
    <property type="method" value="EM"/>
    <property type="resolution" value="2.60 A"/>
    <property type="chains" value="A=1-344"/>
</dbReference>
<dbReference type="PDB" id="8OM2">
    <property type="method" value="EM"/>
    <property type="resolution" value="2.57 A"/>
    <property type="chains" value="A=1-344"/>
</dbReference>
<dbReference type="PDB" id="8OM3">
    <property type="method" value="EM"/>
    <property type="resolution" value="2.87 A"/>
    <property type="chains" value="A=1-344"/>
</dbReference>
<dbReference type="PDB" id="8OM4">
    <property type="method" value="EM"/>
    <property type="resolution" value="2.32 A"/>
    <property type="chains" value="A=1-344"/>
</dbReference>
<dbReference type="PDBsum" id="5MRC"/>
<dbReference type="PDBsum" id="5MRE"/>
<dbReference type="PDBsum" id="5MRF"/>
<dbReference type="PDBsum" id="8D8K"/>
<dbReference type="PDBsum" id="8D8L"/>
<dbReference type="PDBsum" id="8OM2"/>
<dbReference type="PDBsum" id="8OM3"/>
<dbReference type="PDBsum" id="8OM4"/>
<dbReference type="EMDB" id="EMD-16966"/>
<dbReference type="EMDB" id="EMD-16967"/>
<dbReference type="EMDB" id="EMD-16968"/>
<dbReference type="EMDB" id="EMD-27250"/>
<dbReference type="EMDB" id="EMD-27251"/>
<dbReference type="EMDB" id="EMD-3551"/>
<dbReference type="EMDB" id="EMD-3552"/>
<dbReference type="EMDB" id="EMD-3553"/>
<dbReference type="SMR" id="Q02950"/>
<dbReference type="BioGRID" id="36063">
    <property type="interactions" value="114"/>
</dbReference>
<dbReference type="ComplexPortal" id="CPX-1603">
    <property type="entry name" value="37S mitochondrial small ribosomal subunit"/>
</dbReference>
<dbReference type="DIP" id="DIP-4002N"/>
<dbReference type="FunCoup" id="Q02950">
    <property type="interactions" value="174"/>
</dbReference>
<dbReference type="IntAct" id="Q02950">
    <property type="interactions" value="38"/>
</dbReference>
<dbReference type="MINT" id="Q02950"/>
<dbReference type="STRING" id="4932.YPL118W"/>
<dbReference type="iPTMnet" id="Q02950"/>
<dbReference type="PaxDb" id="4932-YPL118W"/>
<dbReference type="PeptideAtlas" id="Q02950"/>
<dbReference type="EnsemblFungi" id="YPL118W_mRNA">
    <property type="protein sequence ID" value="YPL118W"/>
    <property type="gene ID" value="YPL118W"/>
</dbReference>
<dbReference type="GeneID" id="855985"/>
<dbReference type="KEGG" id="sce:YPL118W"/>
<dbReference type="AGR" id="SGD:S000006039"/>
<dbReference type="SGD" id="S000006039">
    <property type="gene designation" value="MRP51"/>
</dbReference>
<dbReference type="VEuPathDB" id="FungiDB:YPL118W"/>
<dbReference type="eggNOG" id="ENOG502R4KN">
    <property type="taxonomic scope" value="Eukaryota"/>
</dbReference>
<dbReference type="HOGENOM" id="CLU_063080_0_0_1"/>
<dbReference type="InParanoid" id="Q02950"/>
<dbReference type="OMA" id="KNAPGKH"/>
<dbReference type="OrthoDB" id="2735536at2759"/>
<dbReference type="BioCyc" id="YEAST:G3O-34017-MONOMER"/>
<dbReference type="BioGRID-ORCS" id="855985">
    <property type="hits" value="2 hits in 10 CRISPR screens"/>
</dbReference>
<dbReference type="PRO" id="PR:Q02950"/>
<dbReference type="Proteomes" id="UP000002311">
    <property type="component" value="Chromosome XVI"/>
</dbReference>
<dbReference type="RNAct" id="Q02950">
    <property type="molecule type" value="protein"/>
</dbReference>
<dbReference type="GO" id="GO:0005743">
    <property type="term" value="C:mitochondrial inner membrane"/>
    <property type="evidence" value="ECO:0000303"/>
    <property type="project" value="ComplexPortal"/>
</dbReference>
<dbReference type="GO" id="GO:0005763">
    <property type="term" value="C:mitochondrial small ribosomal subunit"/>
    <property type="evidence" value="ECO:0000314"/>
    <property type="project" value="SGD"/>
</dbReference>
<dbReference type="GO" id="GO:0005739">
    <property type="term" value="C:mitochondrion"/>
    <property type="evidence" value="ECO:0007005"/>
    <property type="project" value="SGD"/>
</dbReference>
<dbReference type="GO" id="GO:0003735">
    <property type="term" value="F:structural constituent of ribosome"/>
    <property type="evidence" value="ECO:0000314"/>
    <property type="project" value="SGD"/>
</dbReference>
<dbReference type="GO" id="GO:0032543">
    <property type="term" value="P:mitochondrial translation"/>
    <property type="evidence" value="ECO:0000315"/>
    <property type="project" value="SGD"/>
</dbReference>
<dbReference type="GO" id="GO:0070124">
    <property type="term" value="P:mitochondrial translational initiation"/>
    <property type="evidence" value="ECO:0000316"/>
    <property type="project" value="SGD"/>
</dbReference>
<dbReference type="InterPro" id="IPR016712">
    <property type="entry name" value="Rbsml_bS1m-like"/>
</dbReference>
<dbReference type="PANTHER" id="PTHR28058">
    <property type="entry name" value="37S RIBOSOMAL PROTEIN MRP51, MITOCHONDRIAL"/>
    <property type="match status" value="1"/>
</dbReference>
<dbReference type="PANTHER" id="PTHR28058:SF1">
    <property type="entry name" value="SMALL RIBOSOMAL SUBUNIT PROTEIN BS1M"/>
    <property type="match status" value="1"/>
</dbReference>
<dbReference type="Pfam" id="PF11709">
    <property type="entry name" value="Mit_ribos_Mrp51"/>
    <property type="match status" value="1"/>
</dbReference>
<dbReference type="PIRSF" id="PIRSF018156">
    <property type="entry name" value="MRPL51_fungal"/>
    <property type="match status" value="1"/>
</dbReference>
<sequence>MTLAELLGRSRIAQVANNHKPLTYTGKKFHPTHQIIETKPSTLYRQEWGLKSAIPSKIKSRYLVYNDLDTLERITTFEPRGGTQWNRLRFQEMGVPIVSNIGRQNPFFKYISRPEDESHAKLSLFKEMKGDTDISPAAMKKRLKKITALIRSFQDEFKEWLVENHPDELKLNSNKLEDYVVKFLNKKLETKTNKKFNTEIIGTGGLSYSLPGKLKNSPNGVIQRTVVPGRILNVVKENNDNKWLAAIGGFVADVVFFQSPPSSFNSMGDFIRMKTFLFEILEASMEKNGSVSMHARLLEPQNDKTREFFNKRPIYKPLTSRRARRPSVGNIQEANNLLNIIKGN</sequence>
<keyword id="KW-0002">3D-structure</keyword>
<keyword id="KW-0496">Mitochondrion</keyword>
<keyword id="KW-0597">Phosphoprotein</keyword>
<keyword id="KW-1185">Reference proteome</keyword>
<keyword id="KW-0687">Ribonucleoprotein</keyword>
<keyword id="KW-0689">Ribosomal protein</keyword>
<feature type="chain" id="PRO_0000087701" description="Small ribosomal subunit protein bS1m">
    <location>
        <begin position="1"/>
        <end position="344"/>
    </location>
</feature>
<feature type="modified residue" description="Phosphoserine" evidence="13">
    <location>
        <position position="327"/>
    </location>
</feature>
<feature type="mutagenesis site" description="Suppresses defects in the 5'UTLs of COX2 and COX3 mitochondrial mRNAs." evidence="8">
    <original>V</original>
    <variation>A</variation>
    <location>
        <position position="235"/>
    </location>
</feature>
<feature type="mutagenesis site" description="Suppresses defects in the 5'UTLs of COX2 and COX3 mitochondrial mRNAs." evidence="8">
    <original>N</original>
    <variation>H</variation>
    <location>
        <position position="241"/>
    </location>
</feature>
<feature type="mutagenesis site" description="Suppresses defects in the 5'UTLs of COX2 and COX3 mitochondrial mRNAs." evidence="8">
    <original>P</original>
    <variation>L</variation>
    <location>
        <position position="260"/>
    </location>
</feature>
<feature type="mutagenesis site" description="Suppresses defects in the 5'UTLs of COX2 and COX3 mitochondrial mRNAs." evidence="8">
    <original>P</original>
    <variation>R</variation>
    <location>
        <position position="261"/>
    </location>
</feature>
<feature type="mutagenesis site" description="Suppresses defects in the 5'UTLs of COX2 and COX3 mitochondrial mRNAs." evidence="8">
    <original>E</original>
    <variation>R</variation>
    <location>
        <position position="279"/>
    </location>
</feature>
<feature type="helix" evidence="15">
    <location>
        <begin position="3"/>
        <end position="9"/>
    </location>
</feature>
<feature type="helix" evidence="15">
    <location>
        <begin position="11"/>
        <end position="14"/>
    </location>
</feature>
<feature type="helix" evidence="15">
    <location>
        <begin position="40"/>
        <end position="44"/>
    </location>
</feature>
<feature type="strand" evidence="15">
    <location>
        <begin position="49"/>
        <end position="52"/>
    </location>
</feature>
<feature type="strand" evidence="15">
    <location>
        <begin position="60"/>
        <end position="68"/>
    </location>
</feature>
<feature type="strand" evidence="15">
    <location>
        <begin position="76"/>
        <end position="78"/>
    </location>
</feature>
<feature type="helix" evidence="15">
    <location>
        <begin position="83"/>
        <end position="93"/>
    </location>
</feature>
<feature type="strand" evidence="15">
    <location>
        <begin position="202"/>
        <end position="206"/>
    </location>
</feature>
<feature type="strand" evidence="15">
    <location>
        <begin position="218"/>
        <end position="222"/>
    </location>
</feature>
<feature type="strand" evidence="15">
    <location>
        <begin position="226"/>
        <end position="233"/>
    </location>
</feature>
<feature type="strand" evidence="15">
    <location>
        <begin position="243"/>
        <end position="247"/>
    </location>
</feature>
<feature type="strand" evidence="15">
    <location>
        <begin position="250"/>
        <end position="255"/>
    </location>
</feature>
<feature type="strand" evidence="14">
    <location>
        <begin position="257"/>
        <end position="259"/>
    </location>
</feature>
<feature type="helix" evidence="15">
    <location>
        <begin position="262"/>
        <end position="267"/>
    </location>
</feature>
<feature type="helix" evidence="15">
    <location>
        <begin position="268"/>
        <end position="273"/>
    </location>
</feature>
<feature type="strand" evidence="15">
    <location>
        <begin position="276"/>
        <end position="285"/>
    </location>
</feature>
<feature type="strand" evidence="15">
    <location>
        <begin position="291"/>
        <end position="297"/>
    </location>
</feature>
<comment type="function">
    <text evidence="8 11 12">Component of the mitochondrial ribosome (mitoribosome), a dedicated translation machinery responsible for the synthesis of mitochondrial genome-encoded proteins, including at least some of the essential transmembrane subunits of the mitochondrial respiratory chain. The mitoribosomes are attached to the mitochondrial inner membrane and translation products are cotranslationally integrated into the membrane. bS1m functionally interacts with the 5'-UTR of mitochondrial mRNAs.</text>
</comment>
<comment type="subunit">
    <text evidence="1 2 7">Component of the mitochondrial small ribosomal subunit (mt-SSU). Mature yeast 74S mitochondrial ribosomes consist of a small (37S) and a large (54S) subunit. The 37S small subunit contains a 15S ribosomal RNA (15S mt-rRNA) and 34 different proteins. The 54S large subunit contains a 21S rRNA (21S mt-rRNA) and 46 different proteins.</text>
</comment>
<comment type="subcellular location">
    <subcellularLocation>
        <location evidence="3 5 8">Mitochondrion</location>
    </subcellularLocation>
    <text evidence="6">Mitoribosomes are tethered to the mitochondrial inner membrane and spatially aligned with the membrane insertion machinery through two distinct membrane contact sites, formed by the 21S rRNA expansion segment 96-ES1 and the inner membrane protein MBA1.</text>
</comment>
<comment type="miscellaneous">
    <text evidence="4">Present with 656 molecules/cell in log phase SD medium.</text>
</comment>
<comment type="similarity">
    <text evidence="10">Belongs to the bacterial ribosomal protein bS1 family.</text>
</comment>
<gene>
    <name type="primary">MRP51</name>
    <name type="ordered locus">YPL118W</name>
</gene>
<name>RT51_YEAST</name>
<reference key="1">
    <citation type="journal article" date="1997" name="Nature">
        <title>The nucleotide sequence of Saccharomyces cerevisiae chromosome XVI.</title>
        <authorList>
            <person name="Bussey H."/>
            <person name="Storms R.K."/>
            <person name="Ahmed A."/>
            <person name="Albermann K."/>
            <person name="Allen E."/>
            <person name="Ansorge W."/>
            <person name="Araujo R."/>
            <person name="Aparicio A."/>
            <person name="Barrell B.G."/>
            <person name="Badcock K."/>
            <person name="Benes V."/>
            <person name="Botstein D."/>
            <person name="Bowman S."/>
            <person name="Brueckner M."/>
            <person name="Carpenter J."/>
            <person name="Cherry J.M."/>
            <person name="Chung E."/>
            <person name="Churcher C.M."/>
            <person name="Coster F."/>
            <person name="Davis K."/>
            <person name="Davis R.W."/>
            <person name="Dietrich F.S."/>
            <person name="Delius H."/>
            <person name="DiPaolo T."/>
            <person name="Dubois E."/>
            <person name="Duesterhoeft A."/>
            <person name="Duncan M."/>
            <person name="Floeth M."/>
            <person name="Fortin N."/>
            <person name="Friesen J.D."/>
            <person name="Fritz C."/>
            <person name="Goffeau A."/>
            <person name="Hall J."/>
            <person name="Hebling U."/>
            <person name="Heumann K."/>
            <person name="Hilbert H."/>
            <person name="Hillier L.W."/>
            <person name="Hunicke-Smith S."/>
            <person name="Hyman R.W."/>
            <person name="Johnston M."/>
            <person name="Kalman S."/>
            <person name="Kleine K."/>
            <person name="Komp C."/>
            <person name="Kurdi O."/>
            <person name="Lashkari D."/>
            <person name="Lew H."/>
            <person name="Lin A."/>
            <person name="Lin D."/>
            <person name="Louis E.J."/>
            <person name="Marathe R."/>
            <person name="Messenguy F."/>
            <person name="Mewes H.-W."/>
            <person name="Mirtipati S."/>
            <person name="Moestl D."/>
            <person name="Mueller-Auer S."/>
            <person name="Namath A."/>
            <person name="Nentwich U."/>
            <person name="Oefner P."/>
            <person name="Pearson D."/>
            <person name="Petel F.X."/>
            <person name="Pohl T.M."/>
            <person name="Purnelle B."/>
            <person name="Rajandream M.A."/>
            <person name="Rechmann S."/>
            <person name="Rieger M."/>
            <person name="Riles L."/>
            <person name="Roberts D."/>
            <person name="Schaefer M."/>
            <person name="Scharfe M."/>
            <person name="Scherens B."/>
            <person name="Schramm S."/>
            <person name="Schroeder M."/>
            <person name="Sdicu A.-M."/>
            <person name="Tettelin H."/>
            <person name="Urrestarazu L.A."/>
            <person name="Ushinsky S."/>
            <person name="Vierendeels F."/>
            <person name="Vissers S."/>
            <person name="Voss H."/>
            <person name="Walsh S.V."/>
            <person name="Wambutt R."/>
            <person name="Wang Y."/>
            <person name="Wedler E."/>
            <person name="Wedler H."/>
            <person name="Winnett E."/>
            <person name="Zhong W.-W."/>
            <person name="Zollner A."/>
            <person name="Vo D.H."/>
            <person name="Hani J."/>
        </authorList>
    </citation>
    <scope>NUCLEOTIDE SEQUENCE [LARGE SCALE GENOMIC DNA]</scope>
    <source>
        <strain>ATCC 204508 / S288c</strain>
    </source>
</reference>
<reference key="2">
    <citation type="journal article" date="2014" name="G3 (Bethesda)">
        <title>The reference genome sequence of Saccharomyces cerevisiae: Then and now.</title>
        <authorList>
            <person name="Engel S.R."/>
            <person name="Dietrich F.S."/>
            <person name="Fisk D.G."/>
            <person name="Binkley G."/>
            <person name="Balakrishnan R."/>
            <person name="Costanzo M.C."/>
            <person name="Dwight S.S."/>
            <person name="Hitz B.C."/>
            <person name="Karra K."/>
            <person name="Nash R.S."/>
            <person name="Weng S."/>
            <person name="Wong E.D."/>
            <person name="Lloyd P."/>
            <person name="Skrzypek M.S."/>
            <person name="Miyasato S.R."/>
            <person name="Simison M."/>
            <person name="Cherry J.M."/>
        </authorList>
    </citation>
    <scope>GENOME REANNOTATION</scope>
    <source>
        <strain>ATCC 204508 / S288c</strain>
    </source>
</reference>
<reference key="3">
    <citation type="journal article" date="2007" name="Genome Res.">
        <title>Approaching a complete repository of sequence-verified protein-encoding clones for Saccharomyces cerevisiae.</title>
        <authorList>
            <person name="Hu Y."/>
            <person name="Rolfs A."/>
            <person name="Bhullar B."/>
            <person name="Murthy T.V.S."/>
            <person name="Zhu C."/>
            <person name="Berger M.F."/>
            <person name="Camargo A.A."/>
            <person name="Kelley F."/>
            <person name="McCarron S."/>
            <person name="Jepson D."/>
            <person name="Richardson A."/>
            <person name="Raphael J."/>
            <person name="Moreira D."/>
            <person name="Taycher E."/>
            <person name="Zuo D."/>
            <person name="Mohr S."/>
            <person name="Kane M.F."/>
            <person name="Williamson J."/>
            <person name="Simpson A.J.G."/>
            <person name="Bulyk M.L."/>
            <person name="Harlow E."/>
            <person name="Marsischky G."/>
            <person name="Kolodner R.D."/>
            <person name="LaBaer J."/>
        </authorList>
    </citation>
    <scope>NUCLEOTIDE SEQUENCE [GENOMIC DNA]</scope>
    <source>
        <strain>ATCC 204508 / S288c</strain>
    </source>
</reference>
<reference key="4">
    <citation type="journal article" date="1998" name="Mol. Cell. Biol.">
        <title>Functional interactions between yeast mitochondrial ribosomes and mRNA 5' untranslated leaders.</title>
        <authorList>
            <person name="Green-Willms N.S."/>
            <person name="Fox T.D."/>
            <person name="Costanzo M.C."/>
        </authorList>
    </citation>
    <scope>FUNCTION</scope>
    <scope>SUBCELLULAR LOCATION</scope>
    <scope>MUTAGENESIS OF VAL-235; ASN-241; PRO-260; PRO-261 AND GLU-279</scope>
</reference>
<reference key="5">
    <citation type="journal article" date="2001" name="J. Biol. Chem.">
        <title>Identification of 12 new yeast mitochondrial ribosomal proteins including 6 that have no prokaryotic homologues.</title>
        <authorList>
            <person name="Saveanu C."/>
            <person name="Fromont-Racine M."/>
            <person name="Harington A."/>
            <person name="Ricard F."/>
            <person name="Namane A."/>
            <person name="Jacquier A."/>
        </authorList>
    </citation>
    <scope>IDENTIFICATION IN THE MITOCHONDRIAL RIBOSOMAL SMALL COMPLEX</scope>
    <scope>IDENTIFICATION BY MASS SPECTROMETRY</scope>
</reference>
<reference key="6">
    <citation type="journal article" date="2002" name="Eur. J. Biochem.">
        <title>Tag-mediated isolation of yeast mitochondrial ribosome and mass spectrometric identification of its new components.</title>
        <authorList>
            <person name="Gan X."/>
            <person name="Kitakawa M."/>
            <person name="Yoshino K."/>
            <person name="Oshiro N."/>
            <person name="Yonezawa K."/>
            <person name="Isono K."/>
        </authorList>
    </citation>
    <scope>IDENTIFICATION IN THE MITOCHONDRIAL RIBOSOMAL SMALL COMPLEX</scope>
    <scope>IDENTIFICATION BY MASS SPECTROMETRY</scope>
</reference>
<reference key="7">
    <citation type="journal article" date="2003" name="Nature">
        <title>Global analysis of protein localization in budding yeast.</title>
        <authorList>
            <person name="Huh W.-K."/>
            <person name="Falvo J.V."/>
            <person name="Gerke L.C."/>
            <person name="Carroll A.S."/>
            <person name="Howson R.W."/>
            <person name="Weissman J.S."/>
            <person name="O'Shea E.K."/>
        </authorList>
    </citation>
    <scope>SUBCELLULAR LOCATION [LARGE SCALE ANALYSIS]</scope>
</reference>
<reference key="8">
    <citation type="journal article" date="2003" name="Nature">
        <title>Global analysis of protein expression in yeast.</title>
        <authorList>
            <person name="Ghaemmaghami S."/>
            <person name="Huh W.-K."/>
            <person name="Bower K."/>
            <person name="Howson R.W."/>
            <person name="Belle A."/>
            <person name="Dephoure N."/>
            <person name="O'Shea E.K."/>
            <person name="Weissman J.S."/>
        </authorList>
    </citation>
    <scope>LEVEL OF PROTEIN EXPRESSION [LARGE SCALE ANALYSIS]</scope>
</reference>
<reference key="9">
    <citation type="journal article" date="2003" name="Proc. Natl. Acad. Sci. U.S.A.">
        <title>The proteome of Saccharomyces cerevisiae mitochondria.</title>
        <authorList>
            <person name="Sickmann A."/>
            <person name="Reinders J."/>
            <person name="Wagner Y."/>
            <person name="Joppich C."/>
            <person name="Zahedi R.P."/>
            <person name="Meyer H.E."/>
            <person name="Schoenfisch B."/>
            <person name="Perschil I."/>
            <person name="Chacinska A."/>
            <person name="Guiard B."/>
            <person name="Rehling P."/>
            <person name="Pfanner N."/>
            <person name="Meisinger C."/>
        </authorList>
    </citation>
    <scope>SUBCELLULAR LOCATION [LARGE SCALE ANALYSIS]</scope>
    <source>
        <strain>ATCC 76625 / YPH499</strain>
    </source>
</reference>
<reference key="10">
    <citation type="journal article" date="2009" name="Science">
        <title>Global analysis of Cdk1 substrate phosphorylation sites provides insights into evolution.</title>
        <authorList>
            <person name="Holt L.J."/>
            <person name="Tuch B.B."/>
            <person name="Villen J."/>
            <person name="Johnson A.D."/>
            <person name="Gygi S.P."/>
            <person name="Morgan D.O."/>
        </authorList>
    </citation>
    <scope>PHOSPHORYLATION [LARGE SCALE ANALYSIS] AT SER-327</scope>
    <scope>IDENTIFICATION BY MASS SPECTROMETRY [LARGE SCALE ANALYSIS]</scope>
</reference>
<reference key="11">
    <citation type="journal article" date="2012" name="Proc. Natl. Acad. Sci. U.S.A.">
        <title>N-terminal acetylome analyses and functional insights of the N-terminal acetyltransferase NatB.</title>
        <authorList>
            <person name="Van Damme P."/>
            <person name="Lasa M."/>
            <person name="Polevoda B."/>
            <person name="Gazquez C."/>
            <person name="Elosegui-Artola A."/>
            <person name="Kim D.S."/>
            <person name="De Juan-Pardo E."/>
            <person name="Demeyer K."/>
            <person name="Hole K."/>
            <person name="Larrea E."/>
            <person name="Timmerman E."/>
            <person name="Prieto J."/>
            <person name="Arnesen T."/>
            <person name="Sherman F."/>
            <person name="Gevaert K."/>
            <person name="Aldabe R."/>
        </authorList>
    </citation>
    <scope>IDENTIFICATION BY MASS SPECTROMETRY [LARGE SCALE ANALYSIS]</scope>
</reference>
<reference key="12">
    <citation type="journal article" date="2015" name="Nat. Commun.">
        <title>Organization of the mitochondrial translation machinery studied in situ by cryoelectron tomography.</title>
        <authorList>
            <person name="Pfeffer S."/>
            <person name="Woellhaf M.W."/>
            <person name="Herrmann J.M."/>
            <person name="Forster F."/>
        </authorList>
    </citation>
    <scope>SUBCELLULAR LOCATION</scope>
</reference>
<reference key="13">
    <citation type="journal article" date="2017" name="Science">
        <title>The structure of the yeast mitochondrial ribosome.</title>
        <authorList>
            <person name="Desai N."/>
            <person name="Brown A."/>
            <person name="Amunts A."/>
            <person name="Ramakrishnan V."/>
        </authorList>
    </citation>
    <scope>STRUCTURE BY ELECTRON MICROSCOPY (3.25 ANGSTROMS)</scope>
    <scope>SUBUNIT</scope>
</reference>
<organism>
    <name type="scientific">Saccharomyces cerevisiae (strain ATCC 204508 / S288c)</name>
    <name type="common">Baker's yeast</name>
    <dbReference type="NCBI Taxonomy" id="559292"/>
    <lineage>
        <taxon>Eukaryota</taxon>
        <taxon>Fungi</taxon>
        <taxon>Dikarya</taxon>
        <taxon>Ascomycota</taxon>
        <taxon>Saccharomycotina</taxon>
        <taxon>Saccharomycetes</taxon>
        <taxon>Saccharomycetales</taxon>
        <taxon>Saccharomycetaceae</taxon>
        <taxon>Saccharomyces</taxon>
    </lineage>
</organism>
<proteinExistence type="evidence at protein level"/>